<feature type="chain" id="PRO_0000450286" description="Guanine nucleotide exchange factor subunit RIC1">
    <location>
        <begin position="1"/>
        <end position="1321"/>
    </location>
</feature>
<feature type="repeat" description="WD 1" evidence="2">
    <location>
        <begin position="63"/>
        <end position="102"/>
    </location>
</feature>
<feature type="repeat" description="WD 2" evidence="2">
    <location>
        <begin position="303"/>
        <end position="342"/>
    </location>
</feature>
<feature type="region of interest" description="Disordered" evidence="3">
    <location>
        <begin position="945"/>
        <end position="964"/>
    </location>
</feature>
<keyword id="KW-0963">Cytoplasm</keyword>
<keyword id="KW-0344">Guanine-nucleotide releasing factor</keyword>
<keyword id="KW-0472">Membrane</keyword>
<keyword id="KW-0597">Phosphoprotein</keyword>
<keyword id="KW-1185">Reference proteome</keyword>
<keyword id="KW-0677">Repeat</keyword>
<keyword id="KW-0853">WD repeat</keyword>
<evidence type="ECO:0000250" key="1">
    <source>
        <dbReference type="UniProtKB" id="P40395"/>
    </source>
</evidence>
<evidence type="ECO:0000250" key="2">
    <source>
        <dbReference type="UniProtKB" id="Q4ADV7"/>
    </source>
</evidence>
<evidence type="ECO:0000256" key="3">
    <source>
        <dbReference type="SAM" id="MobiDB-lite"/>
    </source>
</evidence>
<evidence type="ECO:0000269" key="4">
    <source>
    </source>
</evidence>
<evidence type="ECO:0000305" key="5"/>
<name>RIC1_DANRE</name>
<gene>
    <name type="primary">ric1</name>
</gene>
<organism>
    <name type="scientific">Danio rerio</name>
    <name type="common">Zebrafish</name>
    <name type="synonym">Brachydanio rerio</name>
    <dbReference type="NCBI Taxonomy" id="7955"/>
    <lineage>
        <taxon>Eukaryota</taxon>
        <taxon>Metazoa</taxon>
        <taxon>Chordata</taxon>
        <taxon>Craniata</taxon>
        <taxon>Vertebrata</taxon>
        <taxon>Euteleostomi</taxon>
        <taxon>Actinopterygii</taxon>
        <taxon>Neopterygii</taxon>
        <taxon>Teleostei</taxon>
        <taxon>Ostariophysi</taxon>
        <taxon>Cypriniformes</taxon>
        <taxon>Danionidae</taxon>
        <taxon>Danioninae</taxon>
        <taxon>Danio</taxon>
    </lineage>
</organism>
<protein>
    <recommendedName>
        <fullName evidence="5">Guanine nucleotide exchange factor subunit RIC1</fullName>
    </recommendedName>
    <alternativeName>
        <fullName evidence="1">Protein RIC1 homolog</fullName>
    </alternativeName>
    <alternativeName>
        <fullName>RAB6A-GEF complex partner 1</fullName>
    </alternativeName>
</protein>
<reference key="1">
    <citation type="journal article" date="2020" name="Nat. Med.">
        <title>Phenome-based approach identifies RIC1-linked Mendelian syndrome through zebrafish models, biobank associations and clinical studies.</title>
        <authorList>
            <person name="Unlu G."/>
            <person name="Qi X."/>
            <person name="Gamazon E.R."/>
            <person name="Melville D.B."/>
            <person name="Patel N."/>
            <person name="Rushing A.R."/>
            <person name="Hashem M."/>
            <person name="Al-Faifi A."/>
            <person name="Chen R."/>
            <person name="Li B."/>
            <person name="Cox N.J."/>
            <person name="Alkuraya F.S."/>
            <person name="Knapik E.W."/>
        </authorList>
    </citation>
    <scope>FUNCTION</scope>
    <scope>DISRUPTION PHENOTYPE</scope>
</reference>
<accession>A0A2R8QPS5</accession>
<sequence>MYFLSGWPRRLLCPLRSDERPFRIEPSAQRFYLAVLSETQISIWFSRPSVLIVSYIESGKAAAQFGFYQQVEWKPDDSMIAVAAANGYVLLFDIIGGLDDKYLYEPVYPKGSARVKVTPGYKEEQCAPALTLEMKKPVDLEAPISCLQSLAEDLLVATADGFLHMLHWDSVSNGRRAVNLCTIPFSLDLQSSRGGPCLDLDGVYIRDLEYCATLDGFAVVFDDGRIGFITPTANRLATDQLQGVWAADVTDGTCVAVNNKYRLMAFGCTSGSVLVYMIDSSTGCMQLSHKLELTPKHYPDIWNKTGPVKMIRWSPDCSVAMVTWECGGLSLWSVFGAHLICTLGEDFAYRSDGTKKDPLKISSMSWGVEGYHLWVIRSSDSTVTEEKQEKLQQNTILQFQFIKSSNQEQVLLQGEDRLYVTCGDPTQTQTPGQCRSSSTAPLSQGLSTLLGHKHWQVVQIHSTYLETNWPIRVRNAHDRRRVTLIMLMLTDHYAVCEQNMTVTGGLAWWNDFVVVACYNFIDRQEELRLYVRSANLDNAFASITKLHADTLLLNVFRNMVILFRADCSICLYSIERRHDGPSPSASVELLQEVSMSRYIPHPGLVVSVTLTSVRTESGITLKAPQQACSAESILLNLAGQLIMLQRDRSGPQVREKDAPANHSKLLPFCPPVVLAQCVESVWTSSRSNRKKRHLMEALWLSCGEAGMKVWLPLFPRDHRKPHSFLSRRIMLPFHINIYPLTVLFEDALILGASNETVLFDGLSSSAEPLEALFPYCTVERTSQIYLHHILRQLLVRNLGEQALMLAQSCASLPYFPHVLELMVHVVLEEEATSREPIPDPLLPTVAKFVTEFPLFLQTIVHCARKTEYALWNYLFAAVGNPKDLFEECLMAQDLDTAASYLIILQNMEVPAVSRQHATLLFNTALEQGKWDLCRHMIRFLKAIGSGESETPPTTPTTQEQSPSSGFEFFRNRSISLSQSADSIAAGKFNLQKTMSMPTGPSSKSDSAENLYIDVMLWRHARRLLEQVRLRDLGCFSAQLGFELIGWLCRERTRVARVDDFVTALKCLHKDFLWPFPVIPACTISSPLKNGRCRPVLSSRLLKSQSADSLLNSEMDTTPPQVSTANHRWLDGLGAVSKELDSASSHGGPQTQEAFLSPLISKGEQVSDIYLYFHPSIHPIHLSIHPSIVLFIHSSFYPSIHPSFHPSIHPSIVLSIHPSIHRSIYLSIHPSIHPSIHPSIVLFIHPSIVPSIHPSIHPSIHPLFYLSIHPSIHPSIHRSIHPSIHRSIYPSIHRSIHPSIHRSIYPFIHPSIVLSIHPSIHC</sequence>
<dbReference type="FunCoup" id="A0A2R8QPS5">
    <property type="interactions" value="2680"/>
</dbReference>
<dbReference type="STRING" id="7955.ENSDARP00000157676"/>
<dbReference type="PaxDb" id="7955-ENSDARP00000076812"/>
<dbReference type="Ensembl" id="ENSDART00000177459">
    <property type="protein sequence ID" value="ENSDARP00000157676"/>
    <property type="gene ID" value="ENSDARG00000108298"/>
</dbReference>
<dbReference type="InParanoid" id="A0A2R8QPS5"/>
<dbReference type="OMA" id="MVYDRAM"/>
<dbReference type="Reactome" id="R-DRE-6811438">
    <property type="pathway name" value="Intra-Golgi traffic"/>
</dbReference>
<dbReference type="Proteomes" id="UP000000437">
    <property type="component" value="Unplaced"/>
</dbReference>
<dbReference type="Bgee" id="ENSDARG00000108298">
    <property type="expression patterns" value="Expressed in early embryo and 20 other cell types or tissues"/>
</dbReference>
<dbReference type="GO" id="GO:0005829">
    <property type="term" value="C:cytosol"/>
    <property type="evidence" value="ECO:0000318"/>
    <property type="project" value="GO_Central"/>
</dbReference>
<dbReference type="GO" id="GO:0000139">
    <property type="term" value="C:Golgi membrane"/>
    <property type="evidence" value="ECO:0000318"/>
    <property type="project" value="GO_Central"/>
</dbReference>
<dbReference type="GO" id="GO:0034066">
    <property type="term" value="C:Ric1-Rgp1 guanyl-nucleotide exchange factor complex"/>
    <property type="evidence" value="ECO:0000318"/>
    <property type="project" value="GO_Central"/>
</dbReference>
<dbReference type="GO" id="GO:0005085">
    <property type="term" value="F:guanyl-nucleotide exchange factor activity"/>
    <property type="evidence" value="ECO:0007669"/>
    <property type="project" value="UniProtKB-KW"/>
</dbReference>
<dbReference type="GO" id="GO:0006886">
    <property type="term" value="P:intracellular protein transport"/>
    <property type="evidence" value="ECO:0000318"/>
    <property type="project" value="GO_Central"/>
</dbReference>
<dbReference type="GO" id="GO:0042147">
    <property type="term" value="P:retrograde transport, endosome to Golgi"/>
    <property type="evidence" value="ECO:0000318"/>
    <property type="project" value="GO_Central"/>
</dbReference>
<dbReference type="Gene3D" id="2.130.10.10">
    <property type="entry name" value="YVTN repeat-like/Quinoprotein amine dehydrogenase"/>
    <property type="match status" value="1"/>
</dbReference>
<dbReference type="InterPro" id="IPR040096">
    <property type="entry name" value="Ric1"/>
</dbReference>
<dbReference type="InterPro" id="IPR009771">
    <property type="entry name" value="RIC1_C"/>
</dbReference>
<dbReference type="InterPro" id="IPR015943">
    <property type="entry name" value="WD40/YVTN_repeat-like_dom_sf"/>
</dbReference>
<dbReference type="InterPro" id="IPR036322">
    <property type="entry name" value="WD40_repeat_dom_sf"/>
</dbReference>
<dbReference type="PANTHER" id="PTHR22746:SF10">
    <property type="entry name" value="GUANINE NUCLEOTIDE EXCHANGE FACTOR SUBUNIT RIC1"/>
    <property type="match status" value="1"/>
</dbReference>
<dbReference type="PANTHER" id="PTHR22746">
    <property type="entry name" value="RAB6A-GEF COMPLEX PARTNER PROTEIN 1"/>
    <property type="match status" value="1"/>
</dbReference>
<dbReference type="Pfam" id="PF25440">
    <property type="entry name" value="Beta-prop_RIC1_2nd"/>
    <property type="match status" value="1"/>
</dbReference>
<dbReference type="Pfam" id="PF07064">
    <property type="entry name" value="RIC1"/>
    <property type="match status" value="1"/>
</dbReference>
<dbReference type="SUPFAM" id="SSF50978">
    <property type="entry name" value="WD40 repeat-like"/>
    <property type="match status" value="1"/>
</dbReference>
<proteinExistence type="inferred from homology"/>
<comment type="function">
    <text evidence="2 4">The RIC1-RGP1 complex acts as a guanine nucleotide exchange factor (GEF), which activates RAB6A by exchanging bound GDP for free GTP, and may be thereby required for efficient fusion of endosome-derived vesicles with the Golgi compartment. The RIC1-RGP1 complex participates in the recycling of mannose-6-phosphate receptors (By similarity). It is a regulator of procollagen transport and secretion, and is required for correct cartilage morphogenesis and development of the craniofacial skeleton (PubMed:31932796).</text>
</comment>
<comment type="subunit">
    <text evidence="2">Forms a complex with rgp1; the interaction enhances rab6a GTPase activity.</text>
</comment>
<comment type="subcellular location">
    <subcellularLocation>
        <location evidence="2">Cytoplasm</location>
        <location evidence="2">Cytosol</location>
    </subcellularLocation>
    <subcellularLocation>
        <location evidence="2">Membrane</location>
    </subcellularLocation>
</comment>
<comment type="disruption phenotype">
    <text evidence="4">ric1-null mutant larvae show micrognathia, small head, shortened trunk, and short, kinked pectoral fins. Craniofacial cartilage elements and newly formed ossification centers are present but they are malformed and smaller than in wild-type controls. Chondrocytes of mutant fishes retain procollagen II intracellularly in large inclusions.</text>
</comment>